<organism>
    <name type="scientific">Staphylococcus aureus (strain COL)</name>
    <dbReference type="NCBI Taxonomy" id="93062"/>
    <lineage>
        <taxon>Bacteria</taxon>
        <taxon>Bacillati</taxon>
        <taxon>Bacillota</taxon>
        <taxon>Bacilli</taxon>
        <taxon>Bacillales</taxon>
        <taxon>Staphylococcaceae</taxon>
        <taxon>Staphylococcus</taxon>
    </lineage>
</organism>
<comment type="function">
    <text evidence="1">Catalyzes the oxidative decarboxylation of 6-phosphogluconate to ribulose 5-phosphate and CO(2), with concomitant reduction of NADP to NADPH.</text>
</comment>
<comment type="catalytic activity">
    <reaction>
        <text>6-phospho-D-gluconate + NADP(+) = D-ribulose 5-phosphate + CO2 + NADPH</text>
        <dbReference type="Rhea" id="RHEA:10116"/>
        <dbReference type="ChEBI" id="CHEBI:16526"/>
        <dbReference type="ChEBI" id="CHEBI:57783"/>
        <dbReference type="ChEBI" id="CHEBI:58121"/>
        <dbReference type="ChEBI" id="CHEBI:58349"/>
        <dbReference type="ChEBI" id="CHEBI:58759"/>
        <dbReference type="EC" id="1.1.1.44"/>
    </reaction>
</comment>
<comment type="pathway">
    <text>Carbohydrate degradation; pentose phosphate pathway; D-ribulose 5-phosphate from D-glucose 6-phosphate (oxidative stage): step 3/3.</text>
</comment>
<comment type="subunit">
    <text evidence="1">Homodimer.</text>
</comment>
<comment type="similarity">
    <text evidence="2">Belongs to the 6-phosphogluconate dehydrogenase family.</text>
</comment>
<keyword id="KW-0311">Gluconate utilization</keyword>
<keyword id="KW-0521">NADP</keyword>
<keyword id="KW-0560">Oxidoreductase</keyword>
<keyword id="KW-0570">Pentose shunt</keyword>
<evidence type="ECO:0000250" key="1"/>
<evidence type="ECO:0000305" key="2"/>
<reference key="1">
    <citation type="journal article" date="2005" name="J. Bacteriol.">
        <title>Insights on evolution of virulence and resistance from the complete genome analysis of an early methicillin-resistant Staphylococcus aureus strain and a biofilm-producing methicillin-resistant Staphylococcus epidermidis strain.</title>
        <authorList>
            <person name="Gill S.R."/>
            <person name="Fouts D.E."/>
            <person name="Archer G.L."/>
            <person name="Mongodin E.F."/>
            <person name="DeBoy R.T."/>
            <person name="Ravel J."/>
            <person name="Paulsen I.T."/>
            <person name="Kolonay J.F."/>
            <person name="Brinkac L.M."/>
            <person name="Beanan M.J."/>
            <person name="Dodson R.J."/>
            <person name="Daugherty S.C."/>
            <person name="Madupu R."/>
            <person name="Angiuoli S.V."/>
            <person name="Durkin A.S."/>
            <person name="Haft D.H."/>
            <person name="Vamathevan J.J."/>
            <person name="Khouri H."/>
            <person name="Utterback T.R."/>
            <person name="Lee C."/>
            <person name="Dimitrov G."/>
            <person name="Jiang L."/>
            <person name="Qin H."/>
            <person name="Weidman J."/>
            <person name="Tran K."/>
            <person name="Kang K.H."/>
            <person name="Hance I.R."/>
            <person name="Nelson K.E."/>
            <person name="Fraser C.M."/>
        </authorList>
    </citation>
    <scope>NUCLEOTIDE SEQUENCE [LARGE SCALE GENOMIC DNA]</scope>
    <source>
        <strain>COL</strain>
    </source>
</reference>
<sequence>MTQQIGVIGLAVMGKNLAWNIESRGYSVSVFNRSSEKTDLMVEESKGKNIHPTYSLEEFVNSLEKPRKILLMVQAGKATDATIDSLLPLLDDGDILIDGGNTNYQDTIRRNKALAQSAINFIGMGVSGGEIGALTGPSLMPGGQEEAYNKVADILDAIAAKAKDGASCVTYIGPNGAGHYVKMVHNGIEYADMQLIAESYAMMKELLGMSHEDIAQTFKDWNAGELESYLIEITGDIFMKLDENKEALVEKILDTAGQKGTGKWTSINALELGIPLTIITESVFARFISSIKEERVNASKELNGPKASFDGDKKDFLEKIRKALYMSKICSYAQGFAQMRKASEDNEWNLKLGDLAMIWREGCIIRAQFLQKIKDAYDNNPGLQNLLLDPYFKNIVTEYQDALRDVVATGVQNGVPTPGFSSSINYYDSYRAADLPANLIQAQRDYFGAHTYERKDKEGVFHTQWIEE</sequence>
<gene>
    <name type="primary">gnd</name>
    <name type="ordered locus">SACOL1554</name>
</gene>
<feature type="chain" id="PRO_0000090052" description="6-phosphogluconate dehydrogenase, decarboxylating">
    <location>
        <begin position="1"/>
        <end position="468"/>
    </location>
</feature>
<feature type="active site" description="Proton acceptor" evidence="1">
    <location>
        <position position="182"/>
    </location>
</feature>
<feature type="active site" description="Proton donor" evidence="1">
    <location>
        <position position="189"/>
    </location>
</feature>
<feature type="binding site" evidence="1">
    <location>
        <begin position="9"/>
        <end position="14"/>
    </location>
    <ligand>
        <name>NADP(+)</name>
        <dbReference type="ChEBI" id="CHEBI:58349"/>
    </ligand>
</feature>
<feature type="binding site" evidence="1">
    <location>
        <begin position="32"/>
        <end position="34"/>
    </location>
    <ligand>
        <name>NADP(+)</name>
        <dbReference type="ChEBI" id="CHEBI:58349"/>
    </ligand>
</feature>
<feature type="binding site" evidence="1">
    <location>
        <begin position="73"/>
        <end position="75"/>
    </location>
    <ligand>
        <name>NADP(+)</name>
        <dbReference type="ChEBI" id="CHEBI:58349"/>
    </ligand>
</feature>
<feature type="binding site" evidence="1">
    <location>
        <position position="101"/>
    </location>
    <ligand>
        <name>NADP(+)</name>
        <dbReference type="ChEBI" id="CHEBI:58349"/>
    </ligand>
</feature>
<feature type="binding site" description="in other chain" evidence="1">
    <location>
        <position position="101"/>
    </location>
    <ligand>
        <name>substrate</name>
        <note>ligand shared between dimeric partners</note>
    </ligand>
</feature>
<feature type="binding site" description="in other chain" evidence="1">
    <location>
        <begin position="127"/>
        <end position="129"/>
    </location>
    <ligand>
        <name>substrate</name>
        <note>ligand shared between dimeric partners</note>
    </ligand>
</feature>
<feature type="binding site" description="in other chain" evidence="1">
    <location>
        <begin position="185"/>
        <end position="186"/>
    </location>
    <ligand>
        <name>substrate</name>
        <note>ligand shared between dimeric partners</note>
    </ligand>
</feature>
<feature type="binding site" description="in other chain" evidence="1">
    <location>
        <position position="190"/>
    </location>
    <ligand>
        <name>substrate</name>
        <note>ligand shared between dimeric partners</note>
    </ligand>
</feature>
<feature type="binding site" description="in other chain" evidence="1">
    <location>
        <position position="259"/>
    </location>
    <ligand>
        <name>substrate</name>
        <note>ligand shared between dimeric partners</note>
    </ligand>
</feature>
<feature type="binding site" description="in other chain" evidence="1">
    <location>
        <position position="286"/>
    </location>
    <ligand>
        <name>substrate</name>
        <note>ligand shared between dimeric partners</note>
    </ligand>
</feature>
<feature type="binding site" evidence="1">
    <location>
        <position position="444"/>
    </location>
    <ligand>
        <name>substrate</name>
        <note>ligand shared between dimeric partners</note>
    </ligand>
</feature>
<feature type="binding site" evidence="1">
    <location>
        <position position="450"/>
    </location>
    <ligand>
        <name>substrate</name>
        <note>ligand shared between dimeric partners</note>
    </ligand>
</feature>
<name>6PGD_STAAC</name>
<protein>
    <recommendedName>
        <fullName>6-phosphogluconate dehydrogenase, decarboxylating</fullName>
        <ecNumber>1.1.1.44</ecNumber>
    </recommendedName>
</protein>
<proteinExistence type="inferred from homology"/>
<accession>Q5HFR2</accession>
<dbReference type="EC" id="1.1.1.44"/>
<dbReference type="EMBL" id="CP000046">
    <property type="protein sequence ID" value="AAW36746.1"/>
    <property type="molecule type" value="Genomic_DNA"/>
</dbReference>
<dbReference type="SMR" id="Q5HFR2"/>
<dbReference type="KEGG" id="sac:SACOL1554"/>
<dbReference type="HOGENOM" id="CLU_024540_4_2_9"/>
<dbReference type="UniPathway" id="UPA00115">
    <property type="reaction ID" value="UER00410"/>
</dbReference>
<dbReference type="Proteomes" id="UP000000530">
    <property type="component" value="Chromosome"/>
</dbReference>
<dbReference type="GO" id="GO:0050661">
    <property type="term" value="F:NADP binding"/>
    <property type="evidence" value="ECO:0007669"/>
    <property type="project" value="InterPro"/>
</dbReference>
<dbReference type="GO" id="GO:0004616">
    <property type="term" value="F:phosphogluconate dehydrogenase (decarboxylating) activity"/>
    <property type="evidence" value="ECO:0007669"/>
    <property type="project" value="UniProtKB-EC"/>
</dbReference>
<dbReference type="GO" id="GO:0019521">
    <property type="term" value="P:D-gluconate metabolic process"/>
    <property type="evidence" value="ECO:0007669"/>
    <property type="project" value="UniProtKB-KW"/>
</dbReference>
<dbReference type="GO" id="GO:0016054">
    <property type="term" value="P:organic acid catabolic process"/>
    <property type="evidence" value="ECO:0007669"/>
    <property type="project" value="UniProtKB-ARBA"/>
</dbReference>
<dbReference type="GO" id="GO:0006098">
    <property type="term" value="P:pentose-phosphate shunt"/>
    <property type="evidence" value="ECO:0007669"/>
    <property type="project" value="UniProtKB-UniPathway"/>
</dbReference>
<dbReference type="FunFam" id="1.10.1040.10:FF:000002">
    <property type="entry name" value="6-phosphogluconate dehydrogenase, decarboxylating"/>
    <property type="match status" value="1"/>
</dbReference>
<dbReference type="FunFam" id="1.20.5.320:FF:000001">
    <property type="entry name" value="6-phosphogluconate dehydrogenase, decarboxylating"/>
    <property type="match status" value="1"/>
</dbReference>
<dbReference type="FunFam" id="3.40.50.720:FF:000007">
    <property type="entry name" value="6-phosphogluconate dehydrogenase, decarboxylating"/>
    <property type="match status" value="1"/>
</dbReference>
<dbReference type="Gene3D" id="1.20.5.320">
    <property type="entry name" value="6-Phosphogluconate Dehydrogenase, domain 3"/>
    <property type="match status" value="1"/>
</dbReference>
<dbReference type="Gene3D" id="1.10.1040.10">
    <property type="entry name" value="N-(1-d-carboxylethyl)-l-norvaline Dehydrogenase, domain 2"/>
    <property type="match status" value="1"/>
</dbReference>
<dbReference type="Gene3D" id="3.40.50.720">
    <property type="entry name" value="NAD(P)-binding Rossmann-like Domain"/>
    <property type="match status" value="1"/>
</dbReference>
<dbReference type="InterPro" id="IPR008927">
    <property type="entry name" value="6-PGluconate_DH-like_C_sf"/>
</dbReference>
<dbReference type="InterPro" id="IPR013328">
    <property type="entry name" value="6PGD_dom2"/>
</dbReference>
<dbReference type="InterPro" id="IPR006114">
    <property type="entry name" value="6PGDH_C"/>
</dbReference>
<dbReference type="InterPro" id="IPR006113">
    <property type="entry name" value="6PGDH_Gnd/GntZ"/>
</dbReference>
<dbReference type="InterPro" id="IPR006115">
    <property type="entry name" value="6PGDH_NADP-bd"/>
</dbReference>
<dbReference type="InterPro" id="IPR006184">
    <property type="entry name" value="6PGdom_BS"/>
</dbReference>
<dbReference type="InterPro" id="IPR036291">
    <property type="entry name" value="NAD(P)-bd_dom_sf"/>
</dbReference>
<dbReference type="InterPro" id="IPR006183">
    <property type="entry name" value="Pgluconate_DH"/>
</dbReference>
<dbReference type="NCBIfam" id="TIGR00873">
    <property type="entry name" value="gnd"/>
    <property type="match status" value="1"/>
</dbReference>
<dbReference type="NCBIfam" id="NF006765">
    <property type="entry name" value="PRK09287.1"/>
    <property type="match status" value="1"/>
</dbReference>
<dbReference type="PANTHER" id="PTHR11811">
    <property type="entry name" value="6-PHOSPHOGLUCONATE DEHYDROGENASE"/>
    <property type="match status" value="1"/>
</dbReference>
<dbReference type="Pfam" id="PF00393">
    <property type="entry name" value="6PGD"/>
    <property type="match status" value="1"/>
</dbReference>
<dbReference type="Pfam" id="PF03446">
    <property type="entry name" value="NAD_binding_2"/>
    <property type="match status" value="1"/>
</dbReference>
<dbReference type="PIRSF" id="PIRSF000109">
    <property type="entry name" value="6PGD"/>
    <property type="match status" value="1"/>
</dbReference>
<dbReference type="PRINTS" id="PR00076">
    <property type="entry name" value="6PGDHDRGNASE"/>
</dbReference>
<dbReference type="SMART" id="SM01350">
    <property type="entry name" value="6PGD"/>
    <property type="match status" value="1"/>
</dbReference>
<dbReference type="SUPFAM" id="SSF48179">
    <property type="entry name" value="6-phosphogluconate dehydrogenase C-terminal domain-like"/>
    <property type="match status" value="1"/>
</dbReference>
<dbReference type="SUPFAM" id="SSF51735">
    <property type="entry name" value="NAD(P)-binding Rossmann-fold domains"/>
    <property type="match status" value="1"/>
</dbReference>
<dbReference type="PROSITE" id="PS00461">
    <property type="entry name" value="6PGD"/>
    <property type="match status" value="1"/>
</dbReference>